<evidence type="ECO:0000255" key="1">
    <source>
        <dbReference type="HAMAP-Rule" id="MF_00131"/>
    </source>
</evidence>
<dbReference type="EC" id="4.2.1.20" evidence="1"/>
<dbReference type="EMBL" id="AF038565">
    <property type="protein sequence ID" value="AAC27736.1"/>
    <property type="molecule type" value="Genomic_DNA"/>
</dbReference>
<dbReference type="RefSeq" id="WP_075433312.1">
    <property type="nucleotide sequence ID" value="NZ_CP013259.1"/>
</dbReference>
<dbReference type="SMR" id="O68429"/>
<dbReference type="STRING" id="118101.ATN01_01375"/>
<dbReference type="OrthoDB" id="9804578at2"/>
<dbReference type="UniPathway" id="UPA00035">
    <property type="reaction ID" value="UER00044"/>
</dbReference>
<dbReference type="GO" id="GO:0005829">
    <property type="term" value="C:cytosol"/>
    <property type="evidence" value="ECO:0007669"/>
    <property type="project" value="TreeGrafter"/>
</dbReference>
<dbReference type="GO" id="GO:0004834">
    <property type="term" value="F:tryptophan synthase activity"/>
    <property type="evidence" value="ECO:0007669"/>
    <property type="project" value="UniProtKB-UniRule"/>
</dbReference>
<dbReference type="CDD" id="cd04724">
    <property type="entry name" value="Tryptophan_synthase_alpha"/>
    <property type="match status" value="1"/>
</dbReference>
<dbReference type="FunFam" id="3.20.20.70:FF:000037">
    <property type="entry name" value="Tryptophan synthase alpha chain"/>
    <property type="match status" value="1"/>
</dbReference>
<dbReference type="Gene3D" id="3.20.20.70">
    <property type="entry name" value="Aldolase class I"/>
    <property type="match status" value="1"/>
</dbReference>
<dbReference type="HAMAP" id="MF_00131">
    <property type="entry name" value="Trp_synth_alpha"/>
    <property type="match status" value="1"/>
</dbReference>
<dbReference type="InterPro" id="IPR013785">
    <property type="entry name" value="Aldolase_TIM"/>
</dbReference>
<dbReference type="InterPro" id="IPR011060">
    <property type="entry name" value="RibuloseP-bd_barrel"/>
</dbReference>
<dbReference type="InterPro" id="IPR018204">
    <property type="entry name" value="Trp_synthase_alpha_AS"/>
</dbReference>
<dbReference type="InterPro" id="IPR002028">
    <property type="entry name" value="Trp_synthase_suA"/>
</dbReference>
<dbReference type="NCBIfam" id="TIGR00262">
    <property type="entry name" value="trpA"/>
    <property type="match status" value="1"/>
</dbReference>
<dbReference type="PANTHER" id="PTHR43406:SF1">
    <property type="entry name" value="TRYPTOPHAN SYNTHASE ALPHA CHAIN, CHLOROPLASTIC"/>
    <property type="match status" value="1"/>
</dbReference>
<dbReference type="PANTHER" id="PTHR43406">
    <property type="entry name" value="TRYPTOPHAN SYNTHASE, ALPHA CHAIN"/>
    <property type="match status" value="1"/>
</dbReference>
<dbReference type="Pfam" id="PF00290">
    <property type="entry name" value="Trp_syntA"/>
    <property type="match status" value="1"/>
</dbReference>
<dbReference type="SUPFAM" id="SSF51366">
    <property type="entry name" value="Ribulose-phoshate binding barrel"/>
    <property type="match status" value="1"/>
</dbReference>
<dbReference type="PROSITE" id="PS00167">
    <property type="entry name" value="TRP_SYNTHASE_ALPHA"/>
    <property type="match status" value="1"/>
</dbReference>
<sequence>MNRYENIFDRLSQRKEGCFVPFVVLGDPSLDTSLKIINILIQNGADALELGIPFSDPLADGKTIQKANLRALSQKNNIFQYFKEIKNLRKKHTQIPIGLLIYANLVYNQGLDNFYLKCRKSGVDSVLIADVPIEESEIFYTTANKYKISSIFICPPNADDDLLYRISLYAKGYIYVLSRPGVTGIENQNFFVSGDFIKKIKKYNSVPLLQGFGISNSIQVKQAISSGLSGVICGSAIINIIEKYLYEEDIMMTKIQEFVKHLKKSTKLIA</sequence>
<gene>
    <name evidence="1" type="primary">trpA</name>
</gene>
<proteinExistence type="inferred from homology"/>
<reference key="1">
    <citation type="journal article" date="1998" name="Curr. Microbiol.">
        <title>The endosymbiont (Buchnera) of the aphid Diuraphis noxia contains all the genes of the tryptophan biosynthetic pathway.</title>
        <authorList>
            <person name="Baumann L."/>
            <person name="Baumann P."/>
            <person name="Moran N.A."/>
        </authorList>
    </citation>
    <scope>NUCLEOTIDE SEQUENCE [GENOMIC DNA]</scope>
</reference>
<keyword id="KW-0028">Amino-acid biosynthesis</keyword>
<keyword id="KW-0057">Aromatic amino acid biosynthesis</keyword>
<keyword id="KW-0456">Lyase</keyword>
<keyword id="KW-0822">Tryptophan biosynthesis</keyword>
<protein>
    <recommendedName>
        <fullName evidence="1">Tryptophan synthase alpha chain</fullName>
        <ecNumber evidence="1">4.2.1.20</ecNumber>
    </recommendedName>
</protein>
<organism>
    <name type="scientific">Buchnera aphidicola subsp. Diuraphis noxia</name>
    <dbReference type="NCBI Taxonomy" id="118101"/>
    <lineage>
        <taxon>Bacteria</taxon>
        <taxon>Pseudomonadati</taxon>
        <taxon>Pseudomonadota</taxon>
        <taxon>Gammaproteobacteria</taxon>
        <taxon>Enterobacterales</taxon>
        <taxon>Erwiniaceae</taxon>
        <taxon>Buchnera</taxon>
    </lineage>
</organism>
<feature type="chain" id="PRO_0000098757" description="Tryptophan synthase alpha chain">
    <location>
        <begin position="1"/>
        <end position="270"/>
    </location>
</feature>
<feature type="active site" description="Proton acceptor" evidence="1">
    <location>
        <position position="49"/>
    </location>
</feature>
<feature type="active site" description="Proton acceptor" evidence="1">
    <location>
        <position position="60"/>
    </location>
</feature>
<name>TRPA_BUCDN</name>
<accession>O68429</accession>
<comment type="function">
    <text evidence="1">The alpha subunit is responsible for the aldol cleavage of indoleglycerol phosphate to indole and glyceraldehyde 3-phosphate.</text>
</comment>
<comment type="catalytic activity">
    <reaction evidence="1">
        <text>(1S,2R)-1-C-(indol-3-yl)glycerol 3-phosphate + L-serine = D-glyceraldehyde 3-phosphate + L-tryptophan + H2O</text>
        <dbReference type="Rhea" id="RHEA:10532"/>
        <dbReference type="ChEBI" id="CHEBI:15377"/>
        <dbReference type="ChEBI" id="CHEBI:33384"/>
        <dbReference type="ChEBI" id="CHEBI:57912"/>
        <dbReference type="ChEBI" id="CHEBI:58866"/>
        <dbReference type="ChEBI" id="CHEBI:59776"/>
        <dbReference type="EC" id="4.2.1.20"/>
    </reaction>
</comment>
<comment type="pathway">
    <text evidence="1">Amino-acid biosynthesis; L-tryptophan biosynthesis; L-tryptophan from chorismate: step 5/5.</text>
</comment>
<comment type="subunit">
    <text evidence="1">Tetramer of two alpha and two beta chains.</text>
</comment>
<comment type="similarity">
    <text evidence="1">Belongs to the TrpA family.</text>
</comment>